<organismHost>
    <name type="scientific">Aves</name>
    <dbReference type="NCBI Taxonomy" id="8782"/>
</organismHost>
<protein>
    <recommendedName>
        <fullName evidence="1">Neuraminidase</fullName>
        <ecNumber evidence="1">3.2.1.18</ecNumber>
    </recommendedName>
</protein>
<feature type="chain" id="PRO_0000280153" description="Neuraminidase">
    <location>
        <begin position="1"/>
        <end position="469"/>
    </location>
</feature>
<feature type="topological domain" description="Intravirion" evidence="1">
    <location>
        <begin position="1"/>
        <end position="6"/>
    </location>
</feature>
<feature type="transmembrane region" description="Helical" evidence="1">
    <location>
        <begin position="7"/>
        <end position="29"/>
    </location>
</feature>
<feature type="topological domain" description="Virion surface" evidence="1">
    <location>
        <begin position="30"/>
        <end position="469"/>
    </location>
</feature>
<feature type="region of interest" description="Involved in apical transport and lipid raft association" evidence="1">
    <location>
        <begin position="11"/>
        <end position="33"/>
    </location>
</feature>
<feature type="region of interest" description="Hypervariable stalk region" evidence="1">
    <location>
        <begin position="36"/>
        <end position="88"/>
    </location>
</feature>
<feature type="region of interest" description="Head of neuraminidase" evidence="1">
    <location>
        <begin position="91"/>
        <end position="469"/>
    </location>
</feature>
<feature type="region of interest" description="Disordered" evidence="2">
    <location>
        <begin position="325"/>
        <end position="349"/>
    </location>
</feature>
<feature type="active site" description="Proton donor/acceptor" evidence="1">
    <location>
        <position position="151"/>
    </location>
</feature>
<feature type="active site" description="Nucleophile" evidence="1">
    <location>
        <position position="406"/>
    </location>
</feature>
<feature type="binding site" evidence="1">
    <location>
        <position position="118"/>
    </location>
    <ligand>
        <name>substrate</name>
    </ligand>
</feature>
<feature type="binding site" evidence="1">
    <location>
        <position position="152"/>
    </location>
    <ligand>
        <name>substrate</name>
    </ligand>
</feature>
<feature type="binding site" evidence="1">
    <location>
        <begin position="276"/>
        <end position="277"/>
    </location>
    <ligand>
        <name>substrate</name>
    </ligand>
</feature>
<feature type="binding site" evidence="1">
    <location>
        <position position="292"/>
    </location>
    <ligand>
        <name>substrate</name>
    </ligand>
</feature>
<feature type="binding site" evidence="1">
    <location>
        <position position="293"/>
    </location>
    <ligand>
        <name>Ca(2+)</name>
        <dbReference type="ChEBI" id="CHEBI:29108"/>
    </ligand>
</feature>
<feature type="binding site" evidence="1">
    <location>
        <position position="297"/>
    </location>
    <ligand>
        <name>Ca(2+)</name>
        <dbReference type="ChEBI" id="CHEBI:29108"/>
    </ligand>
</feature>
<feature type="binding site" evidence="1">
    <location>
        <position position="324"/>
    </location>
    <ligand>
        <name>Ca(2+)</name>
        <dbReference type="ChEBI" id="CHEBI:29108"/>
    </ligand>
</feature>
<feature type="binding site" evidence="1">
    <location>
        <position position="371"/>
    </location>
    <ligand>
        <name>substrate</name>
    </ligand>
</feature>
<feature type="glycosylation site" description="N-linked (GlcNAc...) asparagine; by host" evidence="1">
    <location>
        <position position="61"/>
    </location>
</feature>
<feature type="glycosylation site" description="N-linked (GlcNAc...) asparagine; by host" evidence="1">
    <location>
        <position position="69"/>
    </location>
</feature>
<feature type="glycosylation site" description="N-linked (GlcNAc...) asparagine; by host" evidence="1">
    <location>
        <position position="70"/>
    </location>
</feature>
<feature type="glycosylation site" description="N-linked (GlcNAc...) asparagine; by host" evidence="1">
    <location>
        <position position="86"/>
    </location>
</feature>
<feature type="glycosylation site" description="N-linked (GlcNAc...) asparagine; by host" evidence="1">
    <location>
        <position position="146"/>
    </location>
</feature>
<feature type="glycosylation site" description="N-linked (GlcNAc...) asparagine; by host" evidence="1">
    <location>
        <position position="200"/>
    </location>
</feature>
<feature type="glycosylation site" description="N-linked (GlcNAc...) asparagine; by host" evidence="1">
    <location>
        <position position="234"/>
    </location>
</feature>
<feature type="glycosylation site" description="N-linked (GlcNAc...) asparagine; by host" evidence="1">
    <location>
        <position position="402"/>
    </location>
</feature>
<feature type="disulfide bond" evidence="1">
    <location>
        <begin position="92"/>
        <end position="417"/>
    </location>
</feature>
<feature type="disulfide bond" evidence="1">
    <location>
        <begin position="124"/>
        <end position="129"/>
    </location>
</feature>
<feature type="disulfide bond" evidence="1">
    <location>
        <begin position="183"/>
        <end position="230"/>
    </location>
</feature>
<feature type="disulfide bond" evidence="1">
    <location>
        <begin position="232"/>
        <end position="237"/>
    </location>
</feature>
<feature type="disulfide bond" evidence="1">
    <location>
        <begin position="278"/>
        <end position="291"/>
    </location>
</feature>
<feature type="disulfide bond" evidence="1">
    <location>
        <begin position="280"/>
        <end position="289"/>
    </location>
</feature>
<feature type="disulfide bond" evidence="1">
    <location>
        <begin position="318"/>
        <end position="337"/>
    </location>
</feature>
<feature type="disulfide bond" evidence="1">
    <location>
        <begin position="421"/>
        <end position="447"/>
    </location>
</feature>
<sequence>MNPNQKIITIGSVSLTIATACFLMQIAILATTVTLHFKQNECSIPANNQVVPCEPIVIERNITEIVYLNNTTIEKEICPEVVEYRNWSKPQCQITGFAPFSKDNSIRLSAGGDIWVTREPYVSCDPSKCYQFALGQGTTLDNKHSNGTIHDRIPHRTLLMNELGVPFHLGTKQVCIAWSSSSCHDGKAWLHVCVTGDDRNATASFIYDGMLVDSIGSWSQNILRTQESECVCINGTCTVVMTDGSASGRADTRILFIREGKIVHISPLSGSAQHIEECSCYPRYPNVRCVCRDNWKGSNRPVIDINMADYSIDSSYVCSGLVGDTPRNDDSSSSSNCRDPNNERGNPGVKGWAFDNGNDVWMGRTISKDSRSGYETFRVIGGWATANSKSQTNRQVIVDNNNWSGYSGIFSVESKSCINRCFYVELIRGRPQETRVWWTSNSIVVFCGTSGTYGTGSWPDGANINFMPI</sequence>
<evidence type="ECO:0000255" key="1">
    <source>
        <dbReference type="HAMAP-Rule" id="MF_04071"/>
    </source>
</evidence>
<evidence type="ECO:0000256" key="2">
    <source>
        <dbReference type="SAM" id="MobiDB-lite"/>
    </source>
</evidence>
<name>NRAM_I80A8</name>
<dbReference type="EC" id="3.2.1.18" evidence="1"/>
<dbReference type="EMBL" id="CY005908">
    <property type="protein sequence ID" value="ABB21822.1"/>
    <property type="molecule type" value="Genomic_RNA"/>
</dbReference>
<dbReference type="SMR" id="Q20NP0"/>
<dbReference type="GlyCosmos" id="Q20NP0">
    <property type="glycosylation" value="8 sites, No reported glycans"/>
</dbReference>
<dbReference type="PRO" id="PR:Q20NP0"/>
<dbReference type="Proteomes" id="UP000008579">
    <property type="component" value="Genome"/>
</dbReference>
<dbReference type="GO" id="GO:0020002">
    <property type="term" value="C:host cell plasma membrane"/>
    <property type="evidence" value="ECO:0007669"/>
    <property type="project" value="UniProtKB-SubCell"/>
</dbReference>
<dbReference type="GO" id="GO:0016020">
    <property type="term" value="C:membrane"/>
    <property type="evidence" value="ECO:0007669"/>
    <property type="project" value="UniProtKB-UniRule"/>
</dbReference>
<dbReference type="GO" id="GO:0055036">
    <property type="term" value="C:virion membrane"/>
    <property type="evidence" value="ECO:0007669"/>
    <property type="project" value="UniProtKB-SubCell"/>
</dbReference>
<dbReference type="GO" id="GO:0004308">
    <property type="term" value="F:exo-alpha-sialidase activity"/>
    <property type="evidence" value="ECO:0007669"/>
    <property type="project" value="UniProtKB-UniRule"/>
</dbReference>
<dbReference type="GO" id="GO:0046872">
    <property type="term" value="F:metal ion binding"/>
    <property type="evidence" value="ECO:0007669"/>
    <property type="project" value="UniProtKB-UniRule"/>
</dbReference>
<dbReference type="GO" id="GO:0005975">
    <property type="term" value="P:carbohydrate metabolic process"/>
    <property type="evidence" value="ECO:0007669"/>
    <property type="project" value="InterPro"/>
</dbReference>
<dbReference type="GO" id="GO:0046761">
    <property type="term" value="P:viral budding from plasma membrane"/>
    <property type="evidence" value="ECO:0007669"/>
    <property type="project" value="UniProtKB-UniRule"/>
</dbReference>
<dbReference type="CDD" id="cd15483">
    <property type="entry name" value="Influenza_NA"/>
    <property type="match status" value="1"/>
</dbReference>
<dbReference type="Gene3D" id="2.120.10.10">
    <property type="match status" value="1"/>
</dbReference>
<dbReference type="HAMAP" id="MF_04071">
    <property type="entry name" value="INFV_NRAM"/>
    <property type="match status" value="1"/>
</dbReference>
<dbReference type="InterPro" id="IPR001860">
    <property type="entry name" value="Glyco_hydro_34"/>
</dbReference>
<dbReference type="InterPro" id="IPR033654">
    <property type="entry name" value="Sialidase_Influenza_A/B"/>
</dbReference>
<dbReference type="InterPro" id="IPR036278">
    <property type="entry name" value="Sialidase_sf"/>
</dbReference>
<dbReference type="Pfam" id="PF00064">
    <property type="entry name" value="Neur"/>
    <property type="match status" value="1"/>
</dbReference>
<dbReference type="SUPFAM" id="SSF50939">
    <property type="entry name" value="Sialidases"/>
    <property type="match status" value="1"/>
</dbReference>
<reference key="1">
    <citation type="journal article" date="2006" name="Science">
        <title>Large-scale sequence analysis of avian influenza isolates.</title>
        <authorList>
            <person name="Obenauer J.C."/>
            <person name="Denson J."/>
            <person name="Mehta P.K."/>
            <person name="Su X."/>
            <person name="Mukatira S."/>
            <person name="Finkelstein D.B."/>
            <person name="Xu X."/>
            <person name="Wang J."/>
            <person name="Ma J."/>
            <person name="Fan Y."/>
            <person name="Rakestraw K.M."/>
            <person name="Webster R.G."/>
            <person name="Hoffmann E."/>
            <person name="Krauss S."/>
            <person name="Zheng J."/>
            <person name="Zhang Z."/>
            <person name="Naeve C.W."/>
        </authorList>
    </citation>
    <scope>NUCLEOTIDE SEQUENCE [GENOMIC RNA]</scope>
</reference>
<reference key="2">
    <citation type="journal article" date="2004" name="Virus Res.">
        <title>Assembly and budding of influenza virus.</title>
        <authorList>
            <person name="Nayak D.P."/>
            <person name="Hui E.K."/>
            <person name="Barman S."/>
        </authorList>
    </citation>
    <scope>REVIEW</scope>
</reference>
<reference key="3">
    <citation type="journal article" date="2005" name="N. Engl. J. Med.">
        <title>Neuraminidase inhibitors for influenza.</title>
        <authorList>
            <person name="Moscona A."/>
        </authorList>
    </citation>
    <scope>REVIEW</scope>
</reference>
<reference key="4">
    <citation type="journal article" date="2005" name="Biol. Pharm. Bull.">
        <title>Sialobiology of influenza: molecular mechanism of host range variation of influenza viruses.</title>
        <authorList>
            <person name="Suzuki Y."/>
        </authorList>
    </citation>
    <scope>REVIEW</scope>
</reference>
<organism>
    <name type="scientific">Influenza A virus (strain A/Turkey/Minnesota/833/1980 H4N2)</name>
    <dbReference type="NCBI Taxonomy" id="383603"/>
    <lineage>
        <taxon>Viruses</taxon>
        <taxon>Riboviria</taxon>
        <taxon>Orthornavirae</taxon>
        <taxon>Negarnaviricota</taxon>
        <taxon>Polyploviricotina</taxon>
        <taxon>Insthoviricetes</taxon>
        <taxon>Articulavirales</taxon>
        <taxon>Orthomyxoviridae</taxon>
        <taxon>Alphainfluenzavirus</taxon>
        <taxon>Alphainfluenzavirus influenzae</taxon>
        <taxon>Influenza A virus</taxon>
    </lineage>
</organism>
<proteinExistence type="inferred from homology"/>
<accession>Q20NP0</accession>
<keyword id="KW-0106">Calcium</keyword>
<keyword id="KW-1015">Disulfide bond</keyword>
<keyword id="KW-0325">Glycoprotein</keyword>
<keyword id="KW-0326">Glycosidase</keyword>
<keyword id="KW-1032">Host cell membrane</keyword>
<keyword id="KW-1043">Host membrane</keyword>
<keyword id="KW-0378">Hydrolase</keyword>
<keyword id="KW-0472">Membrane</keyword>
<keyword id="KW-0479">Metal-binding</keyword>
<keyword id="KW-0735">Signal-anchor</keyword>
<keyword id="KW-0812">Transmembrane</keyword>
<keyword id="KW-1133">Transmembrane helix</keyword>
<keyword id="KW-0946">Virion</keyword>
<gene>
    <name evidence="1" type="primary">NA</name>
</gene>
<comment type="function">
    <text evidence="1">Catalyzes the removal of terminal sialic acid residues from viral and cellular glycoconjugates. Cleaves off the terminal sialic acids on the glycosylated HA during virus budding to facilitate virus release. Additionally helps virus spread through the circulation by further removing sialic acids from the cell surface. These cleavages prevent self-aggregation and ensure the efficient spread of the progeny virus from cell to cell. Otherwise, infection would be limited to one round of replication. Described as a receptor-destroying enzyme because it cleaves a terminal sialic acid from the cellular receptors. May facilitate viral invasion of the upper airways by cleaving the sialic acid moieties on the mucin of the airway epithelial cells. Likely to plays a role in the budding process through its association with lipid rafts during intracellular transport. May additionally display a raft-association independent effect on budding. Plays a role in the determination of host range restriction on replication and virulence. Sialidase activity in late endosome/lysosome traffic seems to enhance virus replication.</text>
</comment>
<comment type="catalytic activity">
    <reaction evidence="1">
        <text>Hydrolysis of alpha-(2-&gt;3)-, alpha-(2-&gt;6)-, alpha-(2-&gt;8)- glycosidic linkages of terminal sialic acid residues in oligosaccharides, glycoproteins, glycolipids, colominic acid and synthetic substrates.</text>
        <dbReference type="EC" id="3.2.1.18"/>
    </reaction>
</comment>
<comment type="cofactor">
    <cofactor evidence="1">
        <name>Ca(2+)</name>
        <dbReference type="ChEBI" id="CHEBI:29108"/>
    </cofactor>
</comment>
<comment type="activity regulation">
    <text evidence="1">Inhibited by the neuraminidase inhibitors zanamivir (Relenza) and oseltamivir (Tamiflu). These drugs interfere with the release of progeny virus from infected cells and are effective against all influenza strains. Resistance to neuraminidase inhibitors is quite rare.</text>
</comment>
<comment type="subunit">
    <text evidence="1">Homotetramer.</text>
</comment>
<comment type="subcellular location">
    <subcellularLocation>
        <location evidence="1">Virion membrane</location>
    </subcellularLocation>
    <subcellularLocation>
        <location evidence="1">Host apical cell membrane</location>
        <topology evidence="1">Single-pass type II membrane protein</topology>
    </subcellularLocation>
    <text evidence="1">Preferentially accumulates at the apical plasma membrane in infected polarized epithelial cells, which is the virus assembly site. Uses lipid rafts for cell surface transport and apical sorting. In the virion, forms a mushroom-shaped spike on the surface of the membrane.</text>
</comment>
<comment type="domain">
    <text evidence="1">Intact N-terminus is essential for virion morphogenesis. Possesses two apical sorting signals, one in the ectodomain, which is likely to be a glycan, and the other in the transmembrane domain. The transmembrane domain also plays a role in lipid raft association.</text>
</comment>
<comment type="PTM">
    <text evidence="1">N-glycosylated.</text>
</comment>
<comment type="miscellaneous">
    <text>The influenza A genome consist of 8 RNA segments. Genetic variation of hemagglutinin and/or neuraminidase genes results in the emergence of new influenza strains. The mechanism of variation can be the result of point mutations or the result of genetic reassortment between segments of two different strains.</text>
</comment>
<comment type="similarity">
    <text evidence="1">Belongs to the glycosyl hydrolase 34 family.</text>
</comment>